<gene>
    <name evidence="1" type="primary">atpF1</name>
    <name type="ordered locus">RHE_CH00867</name>
</gene>
<sequence>MEFHFDATFFAFVGLILFLALVVYLKVPGMMARSLDDRADQIRNELAEAKRLREEAQHLLAEYQRKRKEAEAEAAHIVAAAEREAEMLTAEAKKKTEEFVANRTALSEQKIKQAEADAMKAVRSAAVDLAIAAAETVLAKKADGKVQSELFGNAVGQVKTRLN</sequence>
<organism>
    <name type="scientific">Rhizobium etli (strain ATCC 51251 / DSM 11541 / JCM 21823 / NBRC 15573 / CFN 42)</name>
    <dbReference type="NCBI Taxonomy" id="347834"/>
    <lineage>
        <taxon>Bacteria</taxon>
        <taxon>Pseudomonadati</taxon>
        <taxon>Pseudomonadota</taxon>
        <taxon>Alphaproteobacteria</taxon>
        <taxon>Hyphomicrobiales</taxon>
        <taxon>Rhizobiaceae</taxon>
        <taxon>Rhizobium/Agrobacterium group</taxon>
        <taxon>Rhizobium</taxon>
    </lineage>
</organism>
<keyword id="KW-0066">ATP synthesis</keyword>
<keyword id="KW-0997">Cell inner membrane</keyword>
<keyword id="KW-1003">Cell membrane</keyword>
<keyword id="KW-0138">CF(0)</keyword>
<keyword id="KW-0375">Hydrogen ion transport</keyword>
<keyword id="KW-0406">Ion transport</keyword>
<keyword id="KW-0472">Membrane</keyword>
<keyword id="KW-1185">Reference proteome</keyword>
<keyword id="KW-0812">Transmembrane</keyword>
<keyword id="KW-1133">Transmembrane helix</keyword>
<keyword id="KW-0813">Transport</keyword>
<evidence type="ECO:0000255" key="1">
    <source>
        <dbReference type="HAMAP-Rule" id="MF_01398"/>
    </source>
</evidence>
<accession>Q2KBV8</accession>
<protein>
    <recommendedName>
        <fullName evidence="1">ATP synthase subunit b 1</fullName>
    </recommendedName>
    <alternativeName>
        <fullName evidence="1">ATP synthase F(0) sector subunit b 1</fullName>
    </alternativeName>
    <alternativeName>
        <fullName evidence="1">ATPase subunit I 1</fullName>
    </alternativeName>
    <alternativeName>
        <fullName evidence="1">F-type ATPase subunit b 1</fullName>
        <shortName evidence="1">F-ATPase subunit b 1</shortName>
    </alternativeName>
</protein>
<dbReference type="EMBL" id="CP000133">
    <property type="protein sequence ID" value="ABC89678.1"/>
    <property type="molecule type" value="Genomic_DNA"/>
</dbReference>
<dbReference type="RefSeq" id="WP_011424215.1">
    <property type="nucleotide sequence ID" value="NC_007761.1"/>
</dbReference>
<dbReference type="SMR" id="Q2KBV8"/>
<dbReference type="KEGG" id="ret:RHE_CH00867"/>
<dbReference type="eggNOG" id="COG0711">
    <property type="taxonomic scope" value="Bacteria"/>
</dbReference>
<dbReference type="HOGENOM" id="CLU_079215_6_1_5"/>
<dbReference type="OrthoDB" id="8479836at2"/>
<dbReference type="Proteomes" id="UP000001936">
    <property type="component" value="Chromosome"/>
</dbReference>
<dbReference type="GO" id="GO:0005886">
    <property type="term" value="C:plasma membrane"/>
    <property type="evidence" value="ECO:0007669"/>
    <property type="project" value="UniProtKB-SubCell"/>
</dbReference>
<dbReference type="GO" id="GO:0045259">
    <property type="term" value="C:proton-transporting ATP synthase complex"/>
    <property type="evidence" value="ECO:0007669"/>
    <property type="project" value="UniProtKB-KW"/>
</dbReference>
<dbReference type="GO" id="GO:0046933">
    <property type="term" value="F:proton-transporting ATP synthase activity, rotational mechanism"/>
    <property type="evidence" value="ECO:0007669"/>
    <property type="project" value="UniProtKB-UniRule"/>
</dbReference>
<dbReference type="GO" id="GO:0046961">
    <property type="term" value="F:proton-transporting ATPase activity, rotational mechanism"/>
    <property type="evidence" value="ECO:0007669"/>
    <property type="project" value="TreeGrafter"/>
</dbReference>
<dbReference type="CDD" id="cd06503">
    <property type="entry name" value="ATP-synt_Fo_b"/>
    <property type="match status" value="1"/>
</dbReference>
<dbReference type="HAMAP" id="MF_01398">
    <property type="entry name" value="ATP_synth_b_bprime"/>
    <property type="match status" value="1"/>
</dbReference>
<dbReference type="InterPro" id="IPR002146">
    <property type="entry name" value="ATP_synth_b/b'su_bac/chlpt"/>
</dbReference>
<dbReference type="InterPro" id="IPR050059">
    <property type="entry name" value="ATP_synthase_B_chain"/>
</dbReference>
<dbReference type="NCBIfam" id="NF006611">
    <property type="entry name" value="PRK09173.1"/>
    <property type="match status" value="1"/>
</dbReference>
<dbReference type="PANTHER" id="PTHR33445:SF1">
    <property type="entry name" value="ATP SYNTHASE SUBUNIT B"/>
    <property type="match status" value="1"/>
</dbReference>
<dbReference type="PANTHER" id="PTHR33445">
    <property type="entry name" value="ATP SYNTHASE SUBUNIT B', CHLOROPLASTIC"/>
    <property type="match status" value="1"/>
</dbReference>
<dbReference type="Pfam" id="PF00430">
    <property type="entry name" value="ATP-synt_B"/>
    <property type="match status" value="1"/>
</dbReference>
<proteinExistence type="inferred from homology"/>
<feature type="chain" id="PRO_0000368707" description="ATP synthase subunit b 1">
    <location>
        <begin position="1"/>
        <end position="163"/>
    </location>
</feature>
<feature type="transmembrane region" description="Helical" evidence="1">
    <location>
        <begin position="5"/>
        <end position="25"/>
    </location>
</feature>
<name>ATPF1_RHIEC</name>
<reference key="1">
    <citation type="journal article" date="2006" name="Proc. Natl. Acad. Sci. U.S.A.">
        <title>The partitioned Rhizobium etli genome: genetic and metabolic redundancy in seven interacting replicons.</title>
        <authorList>
            <person name="Gonzalez V."/>
            <person name="Santamaria R.I."/>
            <person name="Bustos P."/>
            <person name="Hernandez-Gonzalez I."/>
            <person name="Medrano-Soto A."/>
            <person name="Moreno-Hagelsieb G."/>
            <person name="Janga S.C."/>
            <person name="Ramirez M.A."/>
            <person name="Jimenez-Jacinto V."/>
            <person name="Collado-Vides J."/>
            <person name="Davila G."/>
        </authorList>
    </citation>
    <scope>NUCLEOTIDE SEQUENCE [LARGE SCALE GENOMIC DNA]</scope>
    <source>
        <strain>ATCC 51251 / DSM 11541 / JCM 21823 / NBRC 15573 / CFN 42</strain>
    </source>
</reference>
<comment type="function">
    <text evidence="1">F(1)F(0) ATP synthase produces ATP from ADP in the presence of a proton or sodium gradient. F-type ATPases consist of two structural domains, F(1) containing the extramembraneous catalytic core and F(0) containing the membrane proton channel, linked together by a central stalk and a peripheral stalk. During catalysis, ATP synthesis in the catalytic domain of F(1) is coupled via a rotary mechanism of the central stalk subunits to proton translocation.</text>
</comment>
<comment type="function">
    <text evidence="1">Component of the F(0) channel, it forms part of the peripheral stalk, linking F(1) to F(0).</text>
</comment>
<comment type="subunit">
    <text evidence="1">F-type ATPases have 2 components, F(1) - the catalytic core - and F(0) - the membrane proton channel. F(1) has five subunits: alpha(3), beta(3), gamma(1), delta(1), epsilon(1). F(0) has three main subunits: a(1), b(2) and c(10-14). The alpha and beta chains form an alternating ring which encloses part of the gamma chain. F(1) is attached to F(0) by a central stalk formed by the gamma and epsilon chains, while a peripheral stalk is formed by the delta and b chains.</text>
</comment>
<comment type="subcellular location">
    <subcellularLocation>
        <location evidence="1">Cell inner membrane</location>
        <topology evidence="1">Single-pass membrane protein</topology>
    </subcellularLocation>
</comment>
<comment type="similarity">
    <text evidence="1">Belongs to the ATPase B chain family.</text>
</comment>